<keyword id="KW-0249">Electron transport</keyword>
<keyword id="KW-0349">Heme</keyword>
<keyword id="KW-0408">Iron</keyword>
<keyword id="KW-0472">Membrane</keyword>
<keyword id="KW-0479">Metal-binding</keyword>
<keyword id="KW-0496">Mitochondrion</keyword>
<keyword id="KW-0999">Mitochondrion inner membrane</keyword>
<keyword id="KW-0679">Respiratory chain</keyword>
<keyword id="KW-0812">Transmembrane</keyword>
<keyword id="KW-1133">Transmembrane helix</keyword>
<keyword id="KW-0813">Transport</keyword>
<keyword id="KW-0830">Ubiquinone</keyword>
<organism>
    <name type="scientific">Pipistrellus pipistrellus</name>
    <name type="common">Common pipistrelle</name>
    <dbReference type="NCBI Taxonomy" id="59474"/>
    <lineage>
        <taxon>Eukaryota</taxon>
        <taxon>Metazoa</taxon>
        <taxon>Chordata</taxon>
        <taxon>Craniata</taxon>
        <taxon>Vertebrata</taxon>
        <taxon>Euteleostomi</taxon>
        <taxon>Mammalia</taxon>
        <taxon>Eutheria</taxon>
        <taxon>Laurasiatheria</taxon>
        <taxon>Chiroptera</taxon>
        <taxon>Yangochiroptera</taxon>
        <taxon>Vespertilionidae</taxon>
        <taxon>Pipistrellus</taxon>
    </lineage>
</organism>
<feature type="chain" id="PRO_0000061402" description="Cytochrome b">
    <location>
        <begin position="1"/>
        <end position="379"/>
    </location>
</feature>
<feature type="transmembrane region" description="Helical" evidence="2">
    <location>
        <begin position="33"/>
        <end position="53"/>
    </location>
</feature>
<feature type="transmembrane region" description="Helical" evidence="2">
    <location>
        <begin position="77"/>
        <end position="98"/>
    </location>
</feature>
<feature type="transmembrane region" description="Helical" evidence="2">
    <location>
        <begin position="113"/>
        <end position="133"/>
    </location>
</feature>
<feature type="transmembrane region" description="Helical" evidence="2">
    <location>
        <begin position="178"/>
        <end position="198"/>
    </location>
</feature>
<feature type="transmembrane region" description="Helical" evidence="2">
    <location>
        <begin position="226"/>
        <end position="246"/>
    </location>
</feature>
<feature type="transmembrane region" description="Helical" evidence="2">
    <location>
        <begin position="288"/>
        <end position="308"/>
    </location>
</feature>
<feature type="transmembrane region" description="Helical" evidence="2">
    <location>
        <begin position="320"/>
        <end position="340"/>
    </location>
</feature>
<feature type="transmembrane region" description="Helical" evidence="2">
    <location>
        <begin position="347"/>
        <end position="367"/>
    </location>
</feature>
<feature type="binding site" description="axial binding residue" evidence="2">
    <location>
        <position position="83"/>
    </location>
    <ligand>
        <name>heme b</name>
        <dbReference type="ChEBI" id="CHEBI:60344"/>
        <label>b562</label>
    </ligand>
    <ligandPart>
        <name>Fe</name>
        <dbReference type="ChEBI" id="CHEBI:18248"/>
    </ligandPart>
</feature>
<feature type="binding site" description="axial binding residue" evidence="2">
    <location>
        <position position="97"/>
    </location>
    <ligand>
        <name>heme b</name>
        <dbReference type="ChEBI" id="CHEBI:60344"/>
        <label>b566</label>
    </ligand>
    <ligandPart>
        <name>Fe</name>
        <dbReference type="ChEBI" id="CHEBI:18248"/>
    </ligandPart>
</feature>
<feature type="binding site" description="axial binding residue" evidence="2">
    <location>
        <position position="182"/>
    </location>
    <ligand>
        <name>heme b</name>
        <dbReference type="ChEBI" id="CHEBI:60344"/>
        <label>b562</label>
    </ligand>
    <ligandPart>
        <name>Fe</name>
        <dbReference type="ChEBI" id="CHEBI:18248"/>
    </ligandPart>
</feature>
<feature type="binding site" description="axial binding residue" evidence="2">
    <location>
        <position position="196"/>
    </location>
    <ligand>
        <name>heme b</name>
        <dbReference type="ChEBI" id="CHEBI:60344"/>
        <label>b566</label>
    </ligand>
    <ligandPart>
        <name>Fe</name>
        <dbReference type="ChEBI" id="CHEBI:18248"/>
    </ligandPart>
</feature>
<feature type="binding site" evidence="2">
    <location>
        <position position="201"/>
    </location>
    <ligand>
        <name>a ubiquinone</name>
        <dbReference type="ChEBI" id="CHEBI:16389"/>
    </ligand>
</feature>
<feature type="sequence variant" description="In clade 1A and clade 1B.">
    <original>N</original>
    <variation>S</variation>
    <location>
        <position position="16"/>
    </location>
</feature>
<feature type="sequence variant" description="In clade 1B.">
    <original>L</original>
    <variation>M</variation>
    <location>
        <position position="82"/>
    </location>
</feature>
<feature type="sequence variant" description="In clade 1A and clade 1B.">
    <original>T</original>
    <variation>A</variation>
    <location>
        <position position="329"/>
    </location>
</feature>
<feature type="sequence conflict" description="In Ref. 1; CAD43201." evidence="5" ref="1">
    <original>I</original>
    <variation>V</variation>
    <location>
        <position position="350"/>
    </location>
</feature>
<gene>
    <name type="primary">MT-CYB</name>
    <name type="synonym">COB</name>
    <name type="synonym">CYTB</name>
    <name type="synonym">MTCYB</name>
</gene>
<reference key="1">
    <citation type="journal article" date="2004" name="J. Mammal.">
        <title>Molecular systematics of the fishing bat Myotis (Pizonyx) vivesi.</title>
        <authorList>
            <person name="Stadelmann B.Y."/>
            <person name="Herrera L.G."/>
            <person name="Arroyo-Cabrales J."/>
            <person name="Flores-Martinez J.J."/>
            <person name="May B.P."/>
            <person name="Ruedi M."/>
        </authorList>
    </citation>
    <scope>NUCLEOTIDE SEQUENCE [GENOMIC DNA]</scope>
    <source>
        <tissue>Liver</tissue>
    </source>
</reference>
<reference key="2">
    <citation type="journal article" date="1997" name="Nature">
        <title>DNA answers the call of pipistrelle bat species.</title>
        <authorList>
            <person name="Barratt E.M."/>
            <person name="Deaville R."/>
            <person name="Burland T.M."/>
            <person name="Bruford M.W."/>
            <person name="Jones G."/>
            <person name="Racey P.A."/>
            <person name="Wayne R.K."/>
        </authorList>
    </citation>
    <scope>NUCLEOTIDE SEQUENCE [GENOMIC DNA] OF 9-119 AND 282-379</scope>
    <source>
        <strain>Clade 1A</strain>
        <strain>Clade 1B</strain>
        <strain>Clade 2A</strain>
        <strain>Clade 2B</strain>
    </source>
</reference>
<name>CYB_PIPPI</name>
<comment type="function">
    <text evidence="2">Component of the ubiquinol-cytochrome c reductase complex (complex III or cytochrome b-c1 complex) that is part of the mitochondrial respiratory chain. The b-c1 complex mediates electron transfer from ubiquinol to cytochrome c. Contributes to the generation of a proton gradient across the mitochondrial membrane that is then used for ATP synthesis.</text>
</comment>
<comment type="cofactor">
    <cofactor evidence="2">
        <name>heme b</name>
        <dbReference type="ChEBI" id="CHEBI:60344"/>
    </cofactor>
    <text evidence="2">Binds 2 heme b groups non-covalently.</text>
</comment>
<comment type="subunit">
    <text evidence="2">The cytochrome bc1 complex contains 11 subunits: 3 respiratory subunits (MT-CYB, CYC1 and UQCRFS1), 2 core proteins (UQCRC1 and UQCRC2) and 6 low-molecular weight proteins (UQCRH/QCR6, UQCRB/QCR7, UQCRQ/QCR8, UQCR10/QCR9, UQCR11/QCR10 and a cleavage product of UQCRFS1). This cytochrome bc1 complex then forms a dimer.</text>
</comment>
<comment type="subcellular location">
    <subcellularLocation>
        <location evidence="2">Mitochondrion inner membrane</location>
        <topology evidence="2">Multi-pass membrane protein</topology>
    </subcellularLocation>
</comment>
<comment type="miscellaneous">
    <text evidence="1">Heme 1 (or BL or b562) is low-potential and absorbs at about 562 nm, and heme 2 (or BH or b566) is high-potential and absorbs at about 566 nm.</text>
</comment>
<comment type="similarity">
    <text evidence="3 4">Belongs to the cytochrome b family.</text>
</comment>
<comment type="caution">
    <text evidence="2">The full-length protein contains only eight transmembrane helices, not nine as predicted by bioinformatics tools.</text>
</comment>
<geneLocation type="mitochondrion"/>
<sequence>MTNIRKSHPLIKIINNSFIDLPAPSNISAWWNFGSLLGICLGLQILTGLFLAMHYTSDTATAFSSVTHICRDVNYGWVLRYLHANGASMFFICLYLHVGRGLYYGSYLFKETWNMGVILLFAVMATAFMGYVLPWGQMSFWGATVITNLLSAIPYIGTDLVEWIWGGFSVDKATLTRFFAFHFLLPFIISALVMVHLLFLHETGSNNPTGIPSNMDMIPFHPYYTIKDILGLFMMILVLLSLVLFSPDMLGDPDNYMPANPLSTPPHIKPEWYFLFAYAILRSIPNKLGGVLALVLSILILVIIPFLHTSKQRSMTFRPLSQCLFWLLTADLLTLTWIGGQPVEHPYVIIGQLASILYFLIIIVIMPLTSLMENHLLKW</sequence>
<dbReference type="EMBL" id="AJ504443">
    <property type="protein sequence ID" value="CAD43201.1"/>
    <property type="molecule type" value="Genomic_DNA"/>
</dbReference>
<dbReference type="EMBL" id="U95499">
    <property type="protein sequence ID" value="AAC48736.1"/>
    <property type="molecule type" value="Genomic_DNA"/>
</dbReference>
<dbReference type="EMBL" id="U95500">
    <property type="protein sequence ID" value="AAC48737.1"/>
    <property type="molecule type" value="Genomic_DNA"/>
</dbReference>
<dbReference type="EMBL" id="U95501">
    <property type="protein sequence ID" value="AAC48738.1"/>
    <property type="molecule type" value="Genomic_DNA"/>
</dbReference>
<dbReference type="EMBL" id="U95502">
    <property type="protein sequence ID" value="AAC48739.1"/>
    <property type="molecule type" value="Genomic_DNA"/>
</dbReference>
<dbReference type="EMBL" id="U95503">
    <property type="protein sequence ID" value="AAC48740.1"/>
    <property type="molecule type" value="Genomic_DNA"/>
</dbReference>
<dbReference type="EMBL" id="U95504">
    <property type="protein sequence ID" value="AAC48741.1"/>
    <property type="molecule type" value="Genomic_DNA"/>
</dbReference>
<dbReference type="EMBL" id="U95505">
    <property type="protein sequence ID" value="AAC48742.1"/>
    <property type="molecule type" value="Genomic_DNA"/>
</dbReference>
<dbReference type="EMBL" id="U95506">
    <property type="protein sequence ID" value="AAC48743.1"/>
    <property type="molecule type" value="Genomic_DNA"/>
</dbReference>
<dbReference type="SMR" id="O21223"/>
<dbReference type="GO" id="GO:0005743">
    <property type="term" value="C:mitochondrial inner membrane"/>
    <property type="evidence" value="ECO:0007669"/>
    <property type="project" value="UniProtKB-SubCell"/>
</dbReference>
<dbReference type="GO" id="GO:0045275">
    <property type="term" value="C:respiratory chain complex III"/>
    <property type="evidence" value="ECO:0007669"/>
    <property type="project" value="InterPro"/>
</dbReference>
<dbReference type="GO" id="GO:0046872">
    <property type="term" value="F:metal ion binding"/>
    <property type="evidence" value="ECO:0007669"/>
    <property type="project" value="UniProtKB-KW"/>
</dbReference>
<dbReference type="GO" id="GO:0008121">
    <property type="term" value="F:ubiquinol-cytochrome-c reductase activity"/>
    <property type="evidence" value="ECO:0007669"/>
    <property type="project" value="InterPro"/>
</dbReference>
<dbReference type="GO" id="GO:0006122">
    <property type="term" value="P:mitochondrial electron transport, ubiquinol to cytochrome c"/>
    <property type="evidence" value="ECO:0007669"/>
    <property type="project" value="TreeGrafter"/>
</dbReference>
<dbReference type="CDD" id="cd00290">
    <property type="entry name" value="cytochrome_b_C"/>
    <property type="match status" value="1"/>
</dbReference>
<dbReference type="CDD" id="cd00284">
    <property type="entry name" value="Cytochrome_b_N"/>
    <property type="match status" value="1"/>
</dbReference>
<dbReference type="FunFam" id="1.20.810.10:FF:000002">
    <property type="entry name" value="Cytochrome b"/>
    <property type="match status" value="1"/>
</dbReference>
<dbReference type="Gene3D" id="1.20.810.10">
    <property type="entry name" value="Cytochrome Bc1 Complex, Chain C"/>
    <property type="match status" value="1"/>
</dbReference>
<dbReference type="InterPro" id="IPR005798">
    <property type="entry name" value="Cyt_b/b6_C"/>
</dbReference>
<dbReference type="InterPro" id="IPR036150">
    <property type="entry name" value="Cyt_b/b6_C_sf"/>
</dbReference>
<dbReference type="InterPro" id="IPR005797">
    <property type="entry name" value="Cyt_b/b6_N"/>
</dbReference>
<dbReference type="InterPro" id="IPR027387">
    <property type="entry name" value="Cytb/b6-like_sf"/>
</dbReference>
<dbReference type="InterPro" id="IPR030689">
    <property type="entry name" value="Cytochrome_b"/>
</dbReference>
<dbReference type="InterPro" id="IPR048260">
    <property type="entry name" value="Cytochrome_b_C_euk/bac"/>
</dbReference>
<dbReference type="InterPro" id="IPR048259">
    <property type="entry name" value="Cytochrome_b_N_euk/bac"/>
</dbReference>
<dbReference type="InterPro" id="IPR016174">
    <property type="entry name" value="Di-haem_cyt_TM"/>
</dbReference>
<dbReference type="PANTHER" id="PTHR19271">
    <property type="entry name" value="CYTOCHROME B"/>
    <property type="match status" value="1"/>
</dbReference>
<dbReference type="PANTHER" id="PTHR19271:SF16">
    <property type="entry name" value="CYTOCHROME B"/>
    <property type="match status" value="1"/>
</dbReference>
<dbReference type="Pfam" id="PF00032">
    <property type="entry name" value="Cytochrom_B_C"/>
    <property type="match status" value="1"/>
</dbReference>
<dbReference type="Pfam" id="PF00033">
    <property type="entry name" value="Cytochrome_B"/>
    <property type="match status" value="1"/>
</dbReference>
<dbReference type="PIRSF" id="PIRSF038885">
    <property type="entry name" value="COB"/>
    <property type="match status" value="1"/>
</dbReference>
<dbReference type="SUPFAM" id="SSF81648">
    <property type="entry name" value="a domain/subunit of cytochrome bc1 complex (Ubiquinol-cytochrome c reductase)"/>
    <property type="match status" value="1"/>
</dbReference>
<dbReference type="SUPFAM" id="SSF81342">
    <property type="entry name" value="Transmembrane di-heme cytochromes"/>
    <property type="match status" value="1"/>
</dbReference>
<dbReference type="PROSITE" id="PS51003">
    <property type="entry name" value="CYTB_CTER"/>
    <property type="match status" value="1"/>
</dbReference>
<dbReference type="PROSITE" id="PS51002">
    <property type="entry name" value="CYTB_NTER"/>
    <property type="match status" value="1"/>
</dbReference>
<proteinExistence type="inferred from homology"/>
<accession>O21223</accession>
<accession>O21103</accession>
<accession>O21802</accession>
<accession>O21827</accession>
<accession>O21832</accession>
<accession>Q7YD80</accession>
<evidence type="ECO:0000250" key="1"/>
<evidence type="ECO:0000250" key="2">
    <source>
        <dbReference type="UniProtKB" id="P00157"/>
    </source>
</evidence>
<evidence type="ECO:0000255" key="3">
    <source>
        <dbReference type="PROSITE-ProRule" id="PRU00967"/>
    </source>
</evidence>
<evidence type="ECO:0000255" key="4">
    <source>
        <dbReference type="PROSITE-ProRule" id="PRU00968"/>
    </source>
</evidence>
<evidence type="ECO:0000305" key="5"/>
<protein>
    <recommendedName>
        <fullName>Cytochrome b</fullName>
    </recommendedName>
    <alternativeName>
        <fullName>Complex III subunit 3</fullName>
    </alternativeName>
    <alternativeName>
        <fullName>Complex III subunit III</fullName>
    </alternativeName>
    <alternativeName>
        <fullName>Cytochrome b-c1 complex subunit 3</fullName>
    </alternativeName>
    <alternativeName>
        <fullName>Ubiquinol-cytochrome-c reductase complex cytochrome b subunit</fullName>
    </alternativeName>
</protein>